<keyword id="KW-0203">Cytokinin biosynthesis</keyword>
<keyword id="KW-0614">Plasmid</keyword>
<keyword id="KW-0808">Transferase</keyword>
<comment type="function">
    <text evidence="1">Transfers dimethylallyl groups to AMP as part of the biosynthesis of cytokinin phytohormones.</text>
</comment>
<comment type="catalytic activity">
    <reaction>
        <text>dimethylallyl diphosphate + AMP = N(6)-(dimethylallyl)adenosine 5'-phosphate + diphosphate</text>
        <dbReference type="Rhea" id="RHEA:15285"/>
        <dbReference type="ChEBI" id="CHEBI:33019"/>
        <dbReference type="ChEBI" id="CHEBI:57526"/>
        <dbReference type="ChEBI" id="CHEBI:57623"/>
        <dbReference type="ChEBI" id="CHEBI:456215"/>
        <dbReference type="EC" id="2.5.1.27"/>
    </reaction>
</comment>
<comment type="similarity">
    <text evidence="2">Belongs to the isopentenyl transferase family.</text>
</comment>
<sequence>MLLYLIYGPTCSGKTDIAIQIAQKTGWPVVALDRVQCCPQIATGSGRPLPSELQSTRRIYLDSRRLTKGIIDAEGAHRRLILEVDWQESEEGLILEGGSVSLLNCMAKSPYWKSGFQWHVKRLRLGDSDAFLARAKQRVTEMFAIREDRPSLLEELAELWNYPATRPILEDIDGYRCAIRFARKHDLAINQLPDIDAERQQDLIEAIAKEYLEHAIMQERDFPQWPEDGARQPVGPATLMRIQ</sequence>
<protein>
    <recommendedName>
        <fullName>Adenylate dimethylallyltransferase</fullName>
        <ecNumber>2.5.1.27</ecNumber>
    </recommendedName>
    <alternativeName>
        <fullName>Dimethylallyl transferase</fullName>
    </alternativeName>
    <alternativeName>
        <fullName>Isopentenyl transferase</fullName>
    </alternativeName>
    <alternativeName>
        <fullName>Trans-zeatin producing protein</fullName>
    </alternativeName>
</protein>
<gene>
    <name type="primary">tzs</name>
</gene>
<dbReference type="EC" id="2.5.1.27"/>
<dbReference type="EMBL" id="X16380">
    <property type="protein sequence ID" value="CAA34417.1"/>
    <property type="molecule type" value="Genomic_DNA"/>
</dbReference>
<dbReference type="PIR" id="S06738">
    <property type="entry name" value="S06738"/>
</dbReference>
<dbReference type="RefSeq" id="WP_034521075.1">
    <property type="nucleotide sequence ID" value="NZ_VCBD01000008.1"/>
</dbReference>
<dbReference type="SMR" id="P14011"/>
<dbReference type="GeneID" id="86852877"/>
<dbReference type="eggNOG" id="COG0324">
    <property type="taxonomic scope" value="Bacteria"/>
</dbReference>
<dbReference type="GO" id="GO:0009824">
    <property type="term" value="F:AMP dimethylallyltransferase activity"/>
    <property type="evidence" value="ECO:0007669"/>
    <property type="project" value="UniProtKB-EC"/>
</dbReference>
<dbReference type="GO" id="GO:0009691">
    <property type="term" value="P:cytokinin biosynthetic process"/>
    <property type="evidence" value="ECO:0007669"/>
    <property type="project" value="UniProtKB-KW"/>
</dbReference>
<dbReference type="Gene3D" id="1.10.287.890">
    <property type="entry name" value="Crystal structure of tRNA isopentenylpyrophosphate transferase (bh2366) domain"/>
    <property type="match status" value="1"/>
</dbReference>
<dbReference type="Gene3D" id="3.40.50.300">
    <property type="entry name" value="P-loop containing nucleotide triphosphate hydrolases"/>
    <property type="match status" value="1"/>
</dbReference>
<dbReference type="InterPro" id="IPR027417">
    <property type="entry name" value="P-loop_NTPase"/>
</dbReference>
<dbReference type="InterPro" id="IPR002648">
    <property type="entry name" value="Tzs"/>
</dbReference>
<dbReference type="Pfam" id="PF01745">
    <property type="entry name" value="IPT"/>
    <property type="match status" value="1"/>
</dbReference>
<dbReference type="PIRSF" id="PIRSF000507">
    <property type="entry name" value="IPT"/>
    <property type="match status" value="1"/>
</dbReference>
<dbReference type="SUPFAM" id="SSF52540">
    <property type="entry name" value="P-loop containing nucleoside triphosphate hydrolases"/>
    <property type="match status" value="1"/>
</dbReference>
<geneLocation type="plasmid">
    <name>pRiA4b</name>
</geneLocation>
<name>IPT_RHIRH</name>
<evidence type="ECO:0000250" key="1"/>
<evidence type="ECO:0000305" key="2"/>
<reference key="1">
    <citation type="journal article" date="1989" name="Nucleic Acids Res.">
        <title>Nucleotide sequence of the tzs gene from Agrobacterium rhizogenes strain A4.</title>
        <authorList>
            <person name="Regier D.A."/>
            <person name="Akiyoshi D.E."/>
            <person name="Gordon M.P."/>
        </authorList>
    </citation>
    <scope>NUCLEOTIDE SEQUENCE [GENOMIC DNA]</scope>
    <source>
        <strain>A4</strain>
    </source>
</reference>
<feature type="chain" id="PRO_0000216429" description="Adenylate dimethylallyltransferase">
    <location>
        <begin position="1"/>
        <end position="243"/>
    </location>
</feature>
<accession>P14011</accession>
<organism>
    <name type="scientific">Rhizobium rhizogenes</name>
    <name type="common">Agrobacterium rhizogenes</name>
    <dbReference type="NCBI Taxonomy" id="359"/>
    <lineage>
        <taxon>Bacteria</taxon>
        <taxon>Pseudomonadati</taxon>
        <taxon>Pseudomonadota</taxon>
        <taxon>Alphaproteobacteria</taxon>
        <taxon>Hyphomicrobiales</taxon>
        <taxon>Rhizobiaceae</taxon>
        <taxon>Rhizobium/Agrobacterium group</taxon>
        <taxon>Rhizobium</taxon>
    </lineage>
</organism>
<proteinExistence type="inferred from homology"/>